<proteinExistence type="inferred from homology"/>
<protein>
    <recommendedName>
        <fullName evidence="1">UPF0237 protein lmo0533</fullName>
    </recommendedName>
</protein>
<reference key="1">
    <citation type="journal article" date="2001" name="Science">
        <title>Comparative genomics of Listeria species.</title>
        <authorList>
            <person name="Glaser P."/>
            <person name="Frangeul L."/>
            <person name="Buchrieser C."/>
            <person name="Rusniok C."/>
            <person name="Amend A."/>
            <person name="Baquero F."/>
            <person name="Berche P."/>
            <person name="Bloecker H."/>
            <person name="Brandt P."/>
            <person name="Chakraborty T."/>
            <person name="Charbit A."/>
            <person name="Chetouani F."/>
            <person name="Couve E."/>
            <person name="de Daruvar A."/>
            <person name="Dehoux P."/>
            <person name="Domann E."/>
            <person name="Dominguez-Bernal G."/>
            <person name="Duchaud E."/>
            <person name="Durant L."/>
            <person name="Dussurget O."/>
            <person name="Entian K.-D."/>
            <person name="Fsihi H."/>
            <person name="Garcia-del Portillo F."/>
            <person name="Garrido P."/>
            <person name="Gautier L."/>
            <person name="Goebel W."/>
            <person name="Gomez-Lopez N."/>
            <person name="Hain T."/>
            <person name="Hauf J."/>
            <person name="Jackson D."/>
            <person name="Jones L.-M."/>
            <person name="Kaerst U."/>
            <person name="Kreft J."/>
            <person name="Kuhn M."/>
            <person name="Kunst F."/>
            <person name="Kurapkat G."/>
            <person name="Madueno E."/>
            <person name="Maitournam A."/>
            <person name="Mata Vicente J."/>
            <person name="Ng E."/>
            <person name="Nedjari H."/>
            <person name="Nordsiek G."/>
            <person name="Novella S."/>
            <person name="de Pablos B."/>
            <person name="Perez-Diaz J.-C."/>
            <person name="Purcell R."/>
            <person name="Remmel B."/>
            <person name="Rose M."/>
            <person name="Schlueter T."/>
            <person name="Simoes N."/>
            <person name="Tierrez A."/>
            <person name="Vazquez-Boland J.-A."/>
            <person name="Voss H."/>
            <person name="Wehland J."/>
            <person name="Cossart P."/>
        </authorList>
    </citation>
    <scope>NUCLEOTIDE SEQUENCE [LARGE SCALE GENOMIC DNA]</scope>
    <source>
        <strain>ATCC BAA-679 / EGD-e</strain>
    </source>
</reference>
<name>Y533_LISMO</name>
<gene>
    <name type="ordered locus">lmo0533</name>
</gene>
<keyword id="KW-1185">Reference proteome</keyword>
<feature type="chain" id="PRO_0000219903" description="UPF0237 protein lmo0533">
    <location>
        <begin position="1"/>
        <end position="89"/>
    </location>
</feature>
<feature type="domain" description="ACT" evidence="1">
    <location>
        <begin position="4"/>
        <end position="78"/>
    </location>
</feature>
<organism>
    <name type="scientific">Listeria monocytogenes serovar 1/2a (strain ATCC BAA-679 / EGD-e)</name>
    <dbReference type="NCBI Taxonomy" id="169963"/>
    <lineage>
        <taxon>Bacteria</taxon>
        <taxon>Bacillati</taxon>
        <taxon>Bacillota</taxon>
        <taxon>Bacilli</taxon>
        <taxon>Bacillales</taxon>
        <taxon>Listeriaceae</taxon>
        <taxon>Listeria</taxon>
    </lineage>
</organism>
<accession>Q8Y9J4</accession>
<dbReference type="EMBL" id="AL591975">
    <property type="protein sequence ID" value="CAC98612.1"/>
    <property type="molecule type" value="Genomic_DNA"/>
</dbReference>
<dbReference type="PIR" id="AF1141">
    <property type="entry name" value="AF1141"/>
</dbReference>
<dbReference type="RefSeq" id="NP_464061.1">
    <property type="nucleotide sequence ID" value="NC_003210.1"/>
</dbReference>
<dbReference type="RefSeq" id="WP_003721327.1">
    <property type="nucleotide sequence ID" value="NZ_CP149495.1"/>
</dbReference>
<dbReference type="SMR" id="Q8Y9J4"/>
<dbReference type="STRING" id="169963.gene:17593184"/>
<dbReference type="PaxDb" id="169963-lmo0533"/>
<dbReference type="EnsemblBacteria" id="CAC98612">
    <property type="protein sequence ID" value="CAC98612"/>
    <property type="gene ID" value="CAC98612"/>
</dbReference>
<dbReference type="GeneID" id="985302"/>
<dbReference type="KEGG" id="lmo:lmo0533"/>
<dbReference type="PATRIC" id="fig|169963.11.peg.552"/>
<dbReference type="eggNOG" id="COG3830">
    <property type="taxonomic scope" value="Bacteria"/>
</dbReference>
<dbReference type="HOGENOM" id="CLU_155669_2_0_9"/>
<dbReference type="OrthoDB" id="9803078at2"/>
<dbReference type="PhylomeDB" id="Q8Y9J4"/>
<dbReference type="BioCyc" id="LMON169963:LMO0533-MONOMER"/>
<dbReference type="Proteomes" id="UP000000817">
    <property type="component" value="Chromosome"/>
</dbReference>
<dbReference type="CDD" id="cd04872">
    <property type="entry name" value="ACT_1ZPV"/>
    <property type="match status" value="1"/>
</dbReference>
<dbReference type="FunFam" id="3.30.70.260:FF:000032">
    <property type="entry name" value="UPF0237 protein SP_0238"/>
    <property type="match status" value="1"/>
</dbReference>
<dbReference type="Gene3D" id="3.30.70.260">
    <property type="match status" value="1"/>
</dbReference>
<dbReference type="HAMAP" id="MF_01054">
    <property type="entry name" value="UPF0237"/>
    <property type="match status" value="1"/>
</dbReference>
<dbReference type="InterPro" id="IPR045865">
    <property type="entry name" value="ACT-like_dom_sf"/>
</dbReference>
<dbReference type="InterPro" id="IPR002912">
    <property type="entry name" value="ACT_dom"/>
</dbReference>
<dbReference type="InterPro" id="IPR050990">
    <property type="entry name" value="UPF0237/GcvR_regulator"/>
</dbReference>
<dbReference type="InterPro" id="IPR022986">
    <property type="entry name" value="UPF0237_ACT"/>
</dbReference>
<dbReference type="NCBIfam" id="NF001220">
    <property type="entry name" value="PRK00194.1"/>
    <property type="match status" value="1"/>
</dbReference>
<dbReference type="PANTHER" id="PTHR34875">
    <property type="entry name" value="UPF0237 PROTEIN MJ1558"/>
    <property type="match status" value="1"/>
</dbReference>
<dbReference type="PANTHER" id="PTHR34875:SF6">
    <property type="entry name" value="UPF0237 PROTEIN MJ1558"/>
    <property type="match status" value="1"/>
</dbReference>
<dbReference type="Pfam" id="PF13740">
    <property type="entry name" value="ACT_6"/>
    <property type="match status" value="1"/>
</dbReference>
<dbReference type="SUPFAM" id="SSF55021">
    <property type="entry name" value="ACT-like"/>
    <property type="match status" value="1"/>
</dbReference>
<dbReference type="PROSITE" id="PS51671">
    <property type="entry name" value="ACT"/>
    <property type="match status" value="1"/>
</dbReference>
<sequence>MRAVLTVIGKDNVGIVAGVSNKLAELNINIVDVSQTIMDGYFTMMMMCDISQITKEFDEVKAELAGKGEDLQVKIHIQREEIFNAMHKL</sequence>
<comment type="similarity">
    <text evidence="1">Belongs to the UPF0237 family.</text>
</comment>
<evidence type="ECO:0000255" key="1">
    <source>
        <dbReference type="HAMAP-Rule" id="MF_01054"/>
    </source>
</evidence>